<accession>B0VSL0</accession>
<evidence type="ECO:0000255" key="1">
    <source>
        <dbReference type="HAMAP-Rule" id="MF_00558"/>
    </source>
</evidence>
<gene>
    <name evidence="1" type="primary">sucC</name>
    <name type="ordered locus">ABSDF0778</name>
</gene>
<name>SUCC_ACIBS</name>
<reference key="1">
    <citation type="journal article" date="2008" name="PLoS ONE">
        <title>Comparative analysis of Acinetobacters: three genomes for three lifestyles.</title>
        <authorList>
            <person name="Vallenet D."/>
            <person name="Nordmann P."/>
            <person name="Barbe V."/>
            <person name="Poirel L."/>
            <person name="Mangenot S."/>
            <person name="Bataille E."/>
            <person name="Dossat C."/>
            <person name="Gas S."/>
            <person name="Kreimeyer A."/>
            <person name="Lenoble P."/>
            <person name="Oztas S."/>
            <person name="Poulain J."/>
            <person name="Segurens B."/>
            <person name="Robert C."/>
            <person name="Abergel C."/>
            <person name="Claverie J.-M."/>
            <person name="Raoult D."/>
            <person name="Medigue C."/>
            <person name="Weissenbach J."/>
            <person name="Cruveiller S."/>
        </authorList>
    </citation>
    <scope>NUCLEOTIDE SEQUENCE [LARGE SCALE GENOMIC DNA]</scope>
    <source>
        <strain>SDF</strain>
    </source>
</reference>
<protein>
    <recommendedName>
        <fullName evidence="1">Succinate--CoA ligase [ADP-forming] subunit beta</fullName>
        <ecNumber evidence="1">6.2.1.5</ecNumber>
    </recommendedName>
    <alternativeName>
        <fullName evidence="1">Succinyl-CoA synthetase subunit beta</fullName>
        <shortName evidence="1">SCS-beta</shortName>
    </alternativeName>
</protein>
<feature type="chain" id="PRO_1000129148" description="Succinate--CoA ligase [ADP-forming] subunit beta">
    <location>
        <begin position="1"/>
        <end position="388"/>
    </location>
</feature>
<feature type="domain" description="ATP-grasp" evidence="1">
    <location>
        <begin position="9"/>
        <end position="245"/>
    </location>
</feature>
<feature type="binding site" evidence="1">
    <location>
        <position position="46"/>
    </location>
    <ligand>
        <name>ATP</name>
        <dbReference type="ChEBI" id="CHEBI:30616"/>
    </ligand>
</feature>
<feature type="binding site" evidence="1">
    <location>
        <begin position="53"/>
        <end position="55"/>
    </location>
    <ligand>
        <name>ATP</name>
        <dbReference type="ChEBI" id="CHEBI:30616"/>
    </ligand>
</feature>
<feature type="binding site" evidence="1">
    <location>
        <position position="100"/>
    </location>
    <ligand>
        <name>ATP</name>
        <dbReference type="ChEBI" id="CHEBI:30616"/>
    </ligand>
</feature>
<feature type="binding site" evidence="1">
    <location>
        <position position="103"/>
    </location>
    <ligand>
        <name>ATP</name>
        <dbReference type="ChEBI" id="CHEBI:30616"/>
    </ligand>
</feature>
<feature type="binding site" evidence="1">
    <location>
        <position position="108"/>
    </location>
    <ligand>
        <name>ATP</name>
        <dbReference type="ChEBI" id="CHEBI:30616"/>
    </ligand>
</feature>
<feature type="binding site" evidence="1">
    <location>
        <position position="200"/>
    </location>
    <ligand>
        <name>Mg(2+)</name>
        <dbReference type="ChEBI" id="CHEBI:18420"/>
    </ligand>
</feature>
<feature type="binding site" evidence="1">
    <location>
        <position position="214"/>
    </location>
    <ligand>
        <name>Mg(2+)</name>
        <dbReference type="ChEBI" id="CHEBI:18420"/>
    </ligand>
</feature>
<feature type="binding site" evidence="1">
    <location>
        <position position="265"/>
    </location>
    <ligand>
        <name>substrate</name>
        <note>ligand shared with subunit alpha</note>
    </ligand>
</feature>
<feature type="binding site" evidence="1">
    <location>
        <begin position="322"/>
        <end position="324"/>
    </location>
    <ligand>
        <name>substrate</name>
        <note>ligand shared with subunit alpha</note>
    </ligand>
</feature>
<proteinExistence type="inferred from homology"/>
<dbReference type="EC" id="6.2.1.5" evidence="1"/>
<dbReference type="EMBL" id="CU468230">
    <property type="protein sequence ID" value="CAP00150.1"/>
    <property type="molecule type" value="Genomic_DNA"/>
</dbReference>
<dbReference type="SMR" id="B0VSL0"/>
<dbReference type="KEGG" id="abm:ABSDF0778"/>
<dbReference type="HOGENOM" id="CLU_037430_0_2_6"/>
<dbReference type="UniPathway" id="UPA00223">
    <property type="reaction ID" value="UER00999"/>
</dbReference>
<dbReference type="Proteomes" id="UP000001741">
    <property type="component" value="Chromosome"/>
</dbReference>
<dbReference type="GO" id="GO:0005829">
    <property type="term" value="C:cytosol"/>
    <property type="evidence" value="ECO:0007669"/>
    <property type="project" value="TreeGrafter"/>
</dbReference>
<dbReference type="GO" id="GO:0042709">
    <property type="term" value="C:succinate-CoA ligase complex"/>
    <property type="evidence" value="ECO:0007669"/>
    <property type="project" value="TreeGrafter"/>
</dbReference>
<dbReference type="GO" id="GO:0005524">
    <property type="term" value="F:ATP binding"/>
    <property type="evidence" value="ECO:0007669"/>
    <property type="project" value="UniProtKB-UniRule"/>
</dbReference>
<dbReference type="GO" id="GO:0000287">
    <property type="term" value="F:magnesium ion binding"/>
    <property type="evidence" value="ECO:0007669"/>
    <property type="project" value="UniProtKB-UniRule"/>
</dbReference>
<dbReference type="GO" id="GO:0004775">
    <property type="term" value="F:succinate-CoA ligase (ADP-forming) activity"/>
    <property type="evidence" value="ECO:0007669"/>
    <property type="project" value="UniProtKB-UniRule"/>
</dbReference>
<dbReference type="GO" id="GO:0004776">
    <property type="term" value="F:succinate-CoA ligase (GDP-forming) activity"/>
    <property type="evidence" value="ECO:0007669"/>
    <property type="project" value="RHEA"/>
</dbReference>
<dbReference type="GO" id="GO:0006104">
    <property type="term" value="P:succinyl-CoA metabolic process"/>
    <property type="evidence" value="ECO:0007669"/>
    <property type="project" value="TreeGrafter"/>
</dbReference>
<dbReference type="GO" id="GO:0006099">
    <property type="term" value="P:tricarboxylic acid cycle"/>
    <property type="evidence" value="ECO:0007669"/>
    <property type="project" value="UniProtKB-UniRule"/>
</dbReference>
<dbReference type="FunFam" id="3.30.1490.20:FF:000002">
    <property type="entry name" value="Succinate--CoA ligase [ADP-forming] subunit beta"/>
    <property type="match status" value="1"/>
</dbReference>
<dbReference type="FunFam" id="3.30.470.20:FF:000002">
    <property type="entry name" value="Succinate--CoA ligase [ADP-forming] subunit beta"/>
    <property type="match status" value="1"/>
</dbReference>
<dbReference type="FunFam" id="3.40.50.261:FF:000001">
    <property type="entry name" value="Succinate--CoA ligase [ADP-forming] subunit beta"/>
    <property type="match status" value="1"/>
</dbReference>
<dbReference type="Gene3D" id="3.30.1490.20">
    <property type="entry name" value="ATP-grasp fold, A domain"/>
    <property type="match status" value="1"/>
</dbReference>
<dbReference type="Gene3D" id="3.30.470.20">
    <property type="entry name" value="ATP-grasp fold, B domain"/>
    <property type="match status" value="1"/>
</dbReference>
<dbReference type="Gene3D" id="3.40.50.261">
    <property type="entry name" value="Succinyl-CoA synthetase domains"/>
    <property type="match status" value="1"/>
</dbReference>
<dbReference type="HAMAP" id="MF_00558">
    <property type="entry name" value="Succ_CoA_beta"/>
    <property type="match status" value="1"/>
</dbReference>
<dbReference type="InterPro" id="IPR011761">
    <property type="entry name" value="ATP-grasp"/>
</dbReference>
<dbReference type="InterPro" id="IPR013650">
    <property type="entry name" value="ATP-grasp_succ-CoA_synth-type"/>
</dbReference>
<dbReference type="InterPro" id="IPR013815">
    <property type="entry name" value="ATP_grasp_subdomain_1"/>
</dbReference>
<dbReference type="InterPro" id="IPR017866">
    <property type="entry name" value="Succ-CoA_synthase_bsu_CS"/>
</dbReference>
<dbReference type="InterPro" id="IPR005811">
    <property type="entry name" value="SUCC_ACL_C"/>
</dbReference>
<dbReference type="InterPro" id="IPR005809">
    <property type="entry name" value="Succ_CoA_ligase-like_bsu"/>
</dbReference>
<dbReference type="InterPro" id="IPR016102">
    <property type="entry name" value="Succinyl-CoA_synth-like"/>
</dbReference>
<dbReference type="NCBIfam" id="NF001913">
    <property type="entry name" value="PRK00696.1"/>
    <property type="match status" value="1"/>
</dbReference>
<dbReference type="NCBIfam" id="TIGR01016">
    <property type="entry name" value="sucCoAbeta"/>
    <property type="match status" value="1"/>
</dbReference>
<dbReference type="PANTHER" id="PTHR11815:SF10">
    <property type="entry name" value="SUCCINATE--COA LIGASE [GDP-FORMING] SUBUNIT BETA, MITOCHONDRIAL"/>
    <property type="match status" value="1"/>
</dbReference>
<dbReference type="PANTHER" id="PTHR11815">
    <property type="entry name" value="SUCCINYL-COA SYNTHETASE BETA CHAIN"/>
    <property type="match status" value="1"/>
</dbReference>
<dbReference type="Pfam" id="PF08442">
    <property type="entry name" value="ATP-grasp_2"/>
    <property type="match status" value="1"/>
</dbReference>
<dbReference type="Pfam" id="PF00549">
    <property type="entry name" value="Ligase_CoA"/>
    <property type="match status" value="1"/>
</dbReference>
<dbReference type="PIRSF" id="PIRSF001554">
    <property type="entry name" value="SucCS_beta"/>
    <property type="match status" value="1"/>
</dbReference>
<dbReference type="SUPFAM" id="SSF56059">
    <property type="entry name" value="Glutathione synthetase ATP-binding domain-like"/>
    <property type="match status" value="1"/>
</dbReference>
<dbReference type="SUPFAM" id="SSF52210">
    <property type="entry name" value="Succinyl-CoA synthetase domains"/>
    <property type="match status" value="1"/>
</dbReference>
<dbReference type="PROSITE" id="PS50975">
    <property type="entry name" value="ATP_GRASP"/>
    <property type="match status" value="1"/>
</dbReference>
<dbReference type="PROSITE" id="PS01217">
    <property type="entry name" value="SUCCINYL_COA_LIG_3"/>
    <property type="match status" value="1"/>
</dbReference>
<comment type="function">
    <text evidence="1">Succinyl-CoA synthetase functions in the citric acid cycle (TCA), coupling the hydrolysis of succinyl-CoA to the synthesis of either ATP or GTP and thus represents the only step of substrate-level phosphorylation in the TCA. The beta subunit provides nucleotide specificity of the enzyme and binds the substrate succinate, while the binding sites for coenzyme A and phosphate are found in the alpha subunit.</text>
</comment>
<comment type="catalytic activity">
    <reaction evidence="1">
        <text>succinate + ATP + CoA = succinyl-CoA + ADP + phosphate</text>
        <dbReference type="Rhea" id="RHEA:17661"/>
        <dbReference type="ChEBI" id="CHEBI:30031"/>
        <dbReference type="ChEBI" id="CHEBI:30616"/>
        <dbReference type="ChEBI" id="CHEBI:43474"/>
        <dbReference type="ChEBI" id="CHEBI:57287"/>
        <dbReference type="ChEBI" id="CHEBI:57292"/>
        <dbReference type="ChEBI" id="CHEBI:456216"/>
        <dbReference type="EC" id="6.2.1.5"/>
    </reaction>
    <physiologicalReaction direction="right-to-left" evidence="1">
        <dbReference type="Rhea" id="RHEA:17663"/>
    </physiologicalReaction>
</comment>
<comment type="catalytic activity">
    <reaction evidence="1">
        <text>GTP + succinate + CoA = succinyl-CoA + GDP + phosphate</text>
        <dbReference type="Rhea" id="RHEA:22120"/>
        <dbReference type="ChEBI" id="CHEBI:30031"/>
        <dbReference type="ChEBI" id="CHEBI:37565"/>
        <dbReference type="ChEBI" id="CHEBI:43474"/>
        <dbReference type="ChEBI" id="CHEBI:57287"/>
        <dbReference type="ChEBI" id="CHEBI:57292"/>
        <dbReference type="ChEBI" id="CHEBI:58189"/>
    </reaction>
    <physiologicalReaction direction="right-to-left" evidence="1">
        <dbReference type="Rhea" id="RHEA:22122"/>
    </physiologicalReaction>
</comment>
<comment type="cofactor">
    <cofactor evidence="1">
        <name>Mg(2+)</name>
        <dbReference type="ChEBI" id="CHEBI:18420"/>
    </cofactor>
    <text evidence="1">Binds 1 Mg(2+) ion per subunit.</text>
</comment>
<comment type="pathway">
    <text evidence="1">Carbohydrate metabolism; tricarboxylic acid cycle; succinate from succinyl-CoA (ligase route): step 1/1.</text>
</comment>
<comment type="subunit">
    <text evidence="1">Heterotetramer of two alpha and two beta subunits.</text>
</comment>
<comment type="similarity">
    <text evidence="1">Belongs to the succinate/malate CoA ligase beta subunit family.</text>
</comment>
<sequence>MNLHEYQAKALLKEYGMPVQEGILATNADEAVAAFEQLGGKFAVMKAQVHAGGRGKAGGVKVAKSKEDVIEFANNIIRTRLVTYQTDANGQPVNSIIVAEDVYPVERELYLGAVVDRSSRRITFMASTEGGVEIEKVAEETPEKIIKVEVDPLVGLQPFQAREVAFALGLKDKQIGQFVKIMTAAYQAFVENDFALFEINPLSVRENGEILCVDAKVGIDSNALYRLPKVAALRDKSQENERELKASEFDLNYVALEGNIGCMVNGAGLAMATMDIIKLYGGQPANFLDVGGGATKERVIEAFKIILADTSVQGVLINIFGGIVRCDMIAEAIIAAVQEVNVTVPVVVRLEGNNAELGAKLLDESGLKLISANGLSDAAEKVVAAVKA</sequence>
<keyword id="KW-0067">ATP-binding</keyword>
<keyword id="KW-0436">Ligase</keyword>
<keyword id="KW-0460">Magnesium</keyword>
<keyword id="KW-0479">Metal-binding</keyword>
<keyword id="KW-0547">Nucleotide-binding</keyword>
<keyword id="KW-0816">Tricarboxylic acid cycle</keyword>
<organism>
    <name type="scientific">Acinetobacter baumannii (strain SDF)</name>
    <dbReference type="NCBI Taxonomy" id="509170"/>
    <lineage>
        <taxon>Bacteria</taxon>
        <taxon>Pseudomonadati</taxon>
        <taxon>Pseudomonadota</taxon>
        <taxon>Gammaproteobacteria</taxon>
        <taxon>Moraxellales</taxon>
        <taxon>Moraxellaceae</taxon>
        <taxon>Acinetobacter</taxon>
        <taxon>Acinetobacter calcoaceticus/baumannii complex</taxon>
    </lineage>
</organism>